<proteinExistence type="inferred from homology"/>
<accession>D7LIN7</accession>
<evidence type="ECO:0000250" key="1"/>
<evidence type="ECO:0000250" key="2">
    <source>
        <dbReference type="UniProtKB" id="Q9SQU2"/>
    </source>
</evidence>
<evidence type="ECO:0000255" key="3"/>
<evidence type="ECO:0000305" key="4"/>
<feature type="initiator methionine" description="Removed" evidence="2">
    <location>
        <position position="1"/>
    </location>
</feature>
<feature type="chain" id="PRO_0000411995" description="Casparian strip membrane protein 1">
    <location>
        <begin position="2"/>
        <end position="203"/>
    </location>
</feature>
<feature type="topological domain" description="Cytoplasmic" evidence="3">
    <location>
        <begin position="2"/>
        <end position="40"/>
    </location>
</feature>
<feature type="transmembrane region" description="Helical" evidence="3">
    <location>
        <begin position="41"/>
        <end position="61"/>
    </location>
</feature>
<feature type="topological domain" description="Extracellular" evidence="3">
    <location>
        <begin position="62"/>
        <end position="92"/>
    </location>
</feature>
<feature type="transmembrane region" description="Helical" evidence="3">
    <location>
        <begin position="93"/>
        <end position="113"/>
    </location>
</feature>
<feature type="topological domain" description="Cytoplasmic" evidence="3">
    <location>
        <begin position="114"/>
        <end position="124"/>
    </location>
</feature>
<feature type="transmembrane region" description="Helical" evidence="3">
    <location>
        <begin position="125"/>
        <end position="145"/>
    </location>
</feature>
<feature type="topological domain" description="Extracellular" evidence="3">
    <location>
        <begin position="146"/>
        <end position="177"/>
    </location>
</feature>
<feature type="transmembrane region" description="Helical" evidence="3">
    <location>
        <begin position="178"/>
        <end position="198"/>
    </location>
</feature>
<feature type="topological domain" description="Cytoplasmic" evidence="3">
    <location>
        <begin position="199"/>
        <end position="203"/>
    </location>
</feature>
<feature type="modified residue" description="N-acetylalanine" evidence="2">
    <location>
        <position position="2"/>
    </location>
</feature>
<feature type="glycosylation site" description="N-linked (GlcNAc...) asparagine" evidence="3">
    <location>
        <position position="156"/>
    </location>
</feature>
<feature type="glycosylation site" description="N-linked (GlcNAc...) asparagine" evidence="3">
    <location>
        <position position="174"/>
    </location>
</feature>
<dbReference type="EMBL" id="GL348716">
    <property type="protein sequence ID" value="EFH57686.1"/>
    <property type="molecule type" value="Genomic_DNA"/>
</dbReference>
<dbReference type="SMR" id="D7LIN7"/>
<dbReference type="STRING" id="81972.D7LIN7"/>
<dbReference type="EnsemblPlants" id="fgenesh2_kg.4__1646__AT2G36100.1">
    <property type="protein sequence ID" value="fgenesh2_kg.4__1646__AT2G36100.1"/>
    <property type="gene ID" value="fgenesh2_kg.4__1646__AT2G36100.1"/>
</dbReference>
<dbReference type="Gramene" id="fgenesh2_kg.4__1646__AT2G36100.1">
    <property type="protein sequence ID" value="fgenesh2_kg.4__1646__AT2G36100.1"/>
    <property type="gene ID" value="fgenesh2_kg.4__1646__AT2G36100.1"/>
</dbReference>
<dbReference type="KEGG" id="aly:9315659"/>
<dbReference type="eggNOG" id="ENOG502R7BC">
    <property type="taxonomic scope" value="Eukaryota"/>
</dbReference>
<dbReference type="HOGENOM" id="CLU_066104_3_1_1"/>
<dbReference type="OrthoDB" id="753675at2759"/>
<dbReference type="Proteomes" id="UP000008694">
    <property type="component" value="Unassembled WGS sequence"/>
</dbReference>
<dbReference type="GO" id="GO:0048226">
    <property type="term" value="C:Casparian strip"/>
    <property type="evidence" value="ECO:0007669"/>
    <property type="project" value="EnsemblPlants"/>
</dbReference>
<dbReference type="GO" id="GO:0005886">
    <property type="term" value="C:plasma membrane"/>
    <property type="evidence" value="ECO:0007669"/>
    <property type="project" value="UniProtKB-SubCell"/>
</dbReference>
<dbReference type="GO" id="GO:0042803">
    <property type="term" value="F:protein homodimerization activity"/>
    <property type="evidence" value="ECO:0007669"/>
    <property type="project" value="EnsemblPlants"/>
</dbReference>
<dbReference type="GO" id="GO:0042545">
    <property type="term" value="P:cell wall modification"/>
    <property type="evidence" value="ECO:0007669"/>
    <property type="project" value="EnsemblPlants"/>
</dbReference>
<dbReference type="GO" id="GO:0007043">
    <property type="term" value="P:cell-cell junction assembly"/>
    <property type="evidence" value="ECO:0007669"/>
    <property type="project" value="EnsemblPlants"/>
</dbReference>
<dbReference type="InterPro" id="IPR006459">
    <property type="entry name" value="CASP/CASPL"/>
</dbReference>
<dbReference type="InterPro" id="IPR006702">
    <property type="entry name" value="CASP_dom"/>
</dbReference>
<dbReference type="InterPro" id="IPR044173">
    <property type="entry name" value="CASPL"/>
</dbReference>
<dbReference type="NCBIfam" id="TIGR01569">
    <property type="entry name" value="A_tha_TIGR01569"/>
    <property type="match status" value="1"/>
</dbReference>
<dbReference type="PANTHER" id="PTHR36488:SF11">
    <property type="entry name" value="CASP-LIKE PROTEIN"/>
    <property type="match status" value="1"/>
</dbReference>
<dbReference type="PANTHER" id="PTHR36488">
    <property type="entry name" value="CASP-LIKE PROTEIN 1U1"/>
    <property type="match status" value="1"/>
</dbReference>
<dbReference type="Pfam" id="PF04535">
    <property type="entry name" value="CASP_dom"/>
    <property type="match status" value="1"/>
</dbReference>
<sequence length="203" mass="21499">MAKESTTIDVGEPSTVTKSSSHVVKKKGFVAAAAGGGAKRGLAIFDFLLRLAAIGVTIGAASVMYTAQETLPFFTQFLQFQAGYDDLPAFQYFVIAVAIVASYLVLSLPFSIVTIVRPLAVAPRLILLIFDTLVVTLNTSAAAAAASIVYLAHNGNQSTNWLPICQQFGDFCQNVSTAVVAASIAILFFIVLIIISAIALKRH</sequence>
<comment type="function">
    <text evidence="1">Regulates membrane-cell wall junctions and localized cell wall deposition. Required for establishment of the Casparian strip membrane domain (CSD) and the subsequent formation of Casparian strips, a cell wall modification of the root endodermis that determines an apoplastic barrier between the intraorganismal apoplasm and the extraorganismal apoplasm and prevents lateral diffusion (By similarity).</text>
</comment>
<comment type="subunit">
    <text evidence="1">Homodimer and heterodimers.</text>
</comment>
<comment type="subcellular location">
    <subcellularLocation>
        <location evidence="1">Cell membrane</location>
        <topology evidence="1">Multi-pass membrane protein</topology>
    </subcellularLocation>
    <text evidence="1">Very restricted localization following a belt shape within the plasma membrane which coincides with the position of the Casparian strip membrane domain in the root endodermis.</text>
</comment>
<comment type="similarity">
    <text evidence="4">Belongs to the Casparian strip membrane proteins (CASP) family.</text>
</comment>
<keyword id="KW-0007">Acetylation</keyword>
<keyword id="KW-1003">Cell membrane</keyword>
<keyword id="KW-0961">Cell wall biogenesis/degradation</keyword>
<keyword id="KW-0325">Glycoprotein</keyword>
<keyword id="KW-0472">Membrane</keyword>
<keyword id="KW-1185">Reference proteome</keyword>
<keyword id="KW-0812">Transmembrane</keyword>
<keyword id="KW-1133">Transmembrane helix</keyword>
<organism>
    <name type="scientific">Arabidopsis lyrata subsp. lyrata</name>
    <name type="common">Lyre-leaved rock-cress</name>
    <dbReference type="NCBI Taxonomy" id="81972"/>
    <lineage>
        <taxon>Eukaryota</taxon>
        <taxon>Viridiplantae</taxon>
        <taxon>Streptophyta</taxon>
        <taxon>Embryophyta</taxon>
        <taxon>Tracheophyta</taxon>
        <taxon>Spermatophyta</taxon>
        <taxon>Magnoliopsida</taxon>
        <taxon>eudicotyledons</taxon>
        <taxon>Gunneridae</taxon>
        <taxon>Pentapetalae</taxon>
        <taxon>rosids</taxon>
        <taxon>malvids</taxon>
        <taxon>Brassicales</taxon>
        <taxon>Brassicaceae</taxon>
        <taxon>Camelineae</taxon>
        <taxon>Arabidopsis</taxon>
    </lineage>
</organism>
<name>CASP1_ARALL</name>
<gene>
    <name type="ORF">ARALYDRAFT_482586</name>
</gene>
<protein>
    <recommendedName>
        <fullName>Casparian strip membrane protein 1</fullName>
        <shortName>AlCASP1</shortName>
    </recommendedName>
</protein>
<reference key="1">
    <citation type="journal article" date="2011" name="Nat. Genet.">
        <title>The Arabidopsis lyrata genome sequence and the basis of rapid genome size change.</title>
        <authorList>
            <person name="Hu T.T."/>
            <person name="Pattyn P."/>
            <person name="Bakker E.G."/>
            <person name="Cao J."/>
            <person name="Cheng J.-F."/>
            <person name="Clark R.M."/>
            <person name="Fahlgren N."/>
            <person name="Fawcett J.A."/>
            <person name="Grimwood J."/>
            <person name="Gundlach H."/>
            <person name="Haberer G."/>
            <person name="Hollister J.D."/>
            <person name="Ossowski S."/>
            <person name="Ottilar R.P."/>
            <person name="Salamov A.A."/>
            <person name="Schneeberger K."/>
            <person name="Spannagl M."/>
            <person name="Wang X."/>
            <person name="Yang L."/>
            <person name="Nasrallah M.E."/>
            <person name="Bergelson J."/>
            <person name="Carrington J.C."/>
            <person name="Gaut B.S."/>
            <person name="Schmutz J."/>
            <person name="Mayer K.F.X."/>
            <person name="Van de Peer Y."/>
            <person name="Grigoriev I.V."/>
            <person name="Nordborg M."/>
            <person name="Weigel D."/>
            <person name="Guo Y.-L."/>
        </authorList>
    </citation>
    <scope>NUCLEOTIDE SEQUENCE [LARGE SCALE GENOMIC DNA]</scope>
    <source>
        <strain>cv. MN47</strain>
    </source>
</reference>
<reference key="2">
    <citation type="journal article" date="2014" name="Plant Physiol.">
        <title>Functional and evolutionary analysis of the CASPARIAN STRIP MEMBRANE DOMAIN PROTEIN family.</title>
        <authorList>
            <person name="Roppolo D."/>
            <person name="Boeckmann B."/>
            <person name="Pfister A."/>
            <person name="Boutet E."/>
            <person name="Rubio M.C."/>
            <person name="Denervaud-Tendon V."/>
            <person name="Vermeer J.E."/>
            <person name="Gheyselinck J."/>
            <person name="Xenarios I."/>
            <person name="Geldner N."/>
        </authorList>
    </citation>
    <scope>GENE FAMILY</scope>
    <scope>NOMENCLATURE</scope>
</reference>